<comment type="function">
    <text evidence="1">Involved in the transposition of the insertion sequence.</text>
</comment>
<comment type="similarity">
    <text evidence="3">Belongs to the transposase 11 family.</text>
</comment>
<accession>P24536</accession>
<dbReference type="EMBL" id="M64065">
    <property type="status" value="NOT_ANNOTATED_CDS"/>
    <property type="molecule type" value="Genomic_DNA"/>
</dbReference>
<dbReference type="PIR" id="JQ1133">
    <property type="entry name" value="JQ1133"/>
</dbReference>
<dbReference type="GO" id="GO:0003677">
    <property type="term" value="F:DNA binding"/>
    <property type="evidence" value="ECO:0007669"/>
    <property type="project" value="UniProtKB-KW"/>
</dbReference>
<dbReference type="GO" id="GO:0004803">
    <property type="term" value="F:transposase activity"/>
    <property type="evidence" value="ECO:0007669"/>
    <property type="project" value="InterPro"/>
</dbReference>
<dbReference type="GO" id="GO:0006313">
    <property type="term" value="P:DNA transposition"/>
    <property type="evidence" value="ECO:0007669"/>
    <property type="project" value="InterPro"/>
</dbReference>
<dbReference type="InterPro" id="IPR002559">
    <property type="entry name" value="Transposase_11"/>
</dbReference>
<dbReference type="NCBIfam" id="NF033580">
    <property type="entry name" value="transpos_IS5_3"/>
    <property type="match status" value="1"/>
</dbReference>
<dbReference type="PANTHER" id="PTHR30007:SF1">
    <property type="entry name" value="BLR1914 PROTEIN"/>
    <property type="match status" value="1"/>
</dbReference>
<dbReference type="PANTHER" id="PTHR30007">
    <property type="entry name" value="PHP DOMAIN PROTEIN"/>
    <property type="match status" value="1"/>
</dbReference>
<dbReference type="Pfam" id="PF01609">
    <property type="entry name" value="DDE_Tnp_1"/>
    <property type="match status" value="1"/>
</dbReference>
<name>T402_BURCE</name>
<keyword id="KW-0233">DNA recombination</keyword>
<keyword id="KW-0238">DNA-binding</keyword>
<keyword id="KW-0814">Transposable element</keyword>
<keyword id="KW-0815">Transposition</keyword>
<proteinExistence type="inferred from homology"/>
<feature type="chain" id="PRO_0000173298" description="Putative transposase for insertion sequence element IS402">
    <location>
        <begin position="1"/>
        <end position="211"/>
    </location>
</feature>
<feature type="region of interest" description="Disordered" evidence="2">
    <location>
        <begin position="51"/>
        <end position="71"/>
    </location>
</feature>
<evidence type="ECO:0000250" key="1"/>
<evidence type="ECO:0000256" key="2">
    <source>
        <dbReference type="SAM" id="MobiDB-lite"/>
    </source>
</evidence>
<evidence type="ECO:0000305" key="3"/>
<organism>
    <name type="scientific">Burkholderia cepacia</name>
    <name type="common">Pseudomonas cepacia</name>
    <dbReference type="NCBI Taxonomy" id="292"/>
    <lineage>
        <taxon>Bacteria</taxon>
        <taxon>Pseudomonadati</taxon>
        <taxon>Pseudomonadota</taxon>
        <taxon>Betaproteobacteria</taxon>
        <taxon>Burkholderiales</taxon>
        <taxon>Burkholderiaceae</taxon>
        <taxon>Burkholderia</taxon>
        <taxon>Burkholderia cepacia complex</taxon>
    </lineage>
</organism>
<reference key="1">
    <citation type="journal article" date="1991" name="Gene">
        <title>Nucleotide sequence of IS402 from Pseudomonas cepacia.</title>
        <authorList>
            <person name="Ferrante A.A."/>
            <person name="Lessie T.G."/>
        </authorList>
    </citation>
    <scope>NUCLEOTIDE SEQUENCE [GENOMIC DNA]</scope>
</reference>
<protein>
    <recommendedName>
        <fullName>Putative transposase for insertion sequence element IS402</fullName>
    </recommendedName>
</protein>
<sequence length="211" mass="23969">MRLGRDMLAPAARLASSRCLGSLARATARKAARSGPDRLLTSRRRFIIDSRRWGRPKTGPNPTDRARPGSKHHIVTDANGTPLAAILTGANVNDVTQLLPLIDAIPPIRGLRGHPLQRPRVVYADRGYDSERHRRALRDRGIEPVIAKRRTEHGSGLGKYRWVVERTHAWLHHFRRLRIRFERRADIHGAFLKLGCCLICWNTLRRADQSL</sequence>